<accession>A1AU58</accession>
<feature type="chain" id="PRO_0000341147" description="D-alanine--D-alanine ligase">
    <location>
        <begin position="1"/>
        <end position="310"/>
    </location>
</feature>
<feature type="domain" description="ATP-grasp" evidence="2">
    <location>
        <begin position="105"/>
        <end position="301"/>
    </location>
</feature>
<feature type="binding site" evidence="2">
    <location>
        <begin position="133"/>
        <end position="186"/>
    </location>
    <ligand>
        <name>ATP</name>
        <dbReference type="ChEBI" id="CHEBI:30616"/>
    </ligand>
</feature>
<feature type="binding site" evidence="2">
    <location>
        <position position="254"/>
    </location>
    <ligand>
        <name>Mg(2+)</name>
        <dbReference type="ChEBI" id="CHEBI:18420"/>
        <label>1</label>
    </ligand>
</feature>
<feature type="binding site" evidence="2">
    <location>
        <position position="267"/>
    </location>
    <ligand>
        <name>Mg(2+)</name>
        <dbReference type="ChEBI" id="CHEBI:18420"/>
        <label>1</label>
    </ligand>
</feature>
<feature type="binding site" evidence="2">
    <location>
        <position position="267"/>
    </location>
    <ligand>
        <name>Mg(2+)</name>
        <dbReference type="ChEBI" id="CHEBI:18420"/>
        <label>2</label>
    </ligand>
</feature>
<feature type="binding site" evidence="2">
    <location>
        <position position="269"/>
    </location>
    <ligand>
        <name>Mg(2+)</name>
        <dbReference type="ChEBI" id="CHEBI:18420"/>
        <label>2</label>
    </ligand>
</feature>
<evidence type="ECO:0000250" key="1"/>
<evidence type="ECO:0000255" key="2">
    <source>
        <dbReference type="HAMAP-Rule" id="MF_00047"/>
    </source>
</evidence>
<comment type="function">
    <text evidence="2">Cell wall formation.</text>
</comment>
<comment type="catalytic activity">
    <reaction evidence="2">
        <text>2 D-alanine + ATP = D-alanyl-D-alanine + ADP + phosphate + H(+)</text>
        <dbReference type="Rhea" id="RHEA:11224"/>
        <dbReference type="ChEBI" id="CHEBI:15378"/>
        <dbReference type="ChEBI" id="CHEBI:30616"/>
        <dbReference type="ChEBI" id="CHEBI:43474"/>
        <dbReference type="ChEBI" id="CHEBI:57416"/>
        <dbReference type="ChEBI" id="CHEBI:57822"/>
        <dbReference type="ChEBI" id="CHEBI:456216"/>
        <dbReference type="EC" id="6.3.2.4"/>
    </reaction>
</comment>
<comment type="cofactor">
    <cofactor evidence="1">
        <name>Mg(2+)</name>
        <dbReference type="ChEBI" id="CHEBI:18420"/>
    </cofactor>
    <cofactor evidence="1">
        <name>Mn(2+)</name>
        <dbReference type="ChEBI" id="CHEBI:29035"/>
    </cofactor>
    <text evidence="1">Binds 2 magnesium or manganese ions per subunit.</text>
</comment>
<comment type="pathway">
    <text evidence="2">Cell wall biogenesis; peptidoglycan biosynthesis.</text>
</comment>
<comment type="subcellular location">
    <subcellularLocation>
        <location evidence="2">Cytoplasm</location>
    </subcellularLocation>
</comment>
<comment type="similarity">
    <text evidence="2">Belongs to the D-alanine--D-alanine ligase family.</text>
</comment>
<name>DDL_PELPD</name>
<protein>
    <recommendedName>
        <fullName evidence="2">D-alanine--D-alanine ligase</fullName>
        <ecNumber evidence="2">6.3.2.4</ecNumber>
    </recommendedName>
    <alternativeName>
        <fullName evidence="2">D-Ala-D-Ala ligase</fullName>
    </alternativeName>
    <alternativeName>
        <fullName evidence="2">D-alanylalanine synthetase</fullName>
    </alternativeName>
</protein>
<keyword id="KW-0067">ATP-binding</keyword>
<keyword id="KW-0133">Cell shape</keyword>
<keyword id="KW-0961">Cell wall biogenesis/degradation</keyword>
<keyword id="KW-0963">Cytoplasm</keyword>
<keyword id="KW-0436">Ligase</keyword>
<keyword id="KW-0460">Magnesium</keyword>
<keyword id="KW-0464">Manganese</keyword>
<keyword id="KW-0479">Metal-binding</keyword>
<keyword id="KW-0547">Nucleotide-binding</keyword>
<keyword id="KW-0573">Peptidoglycan synthesis</keyword>
<keyword id="KW-1185">Reference proteome</keyword>
<gene>
    <name evidence="2" type="primary">ddl</name>
    <name type="ordered locus">Ppro_3286</name>
</gene>
<dbReference type="EC" id="6.3.2.4" evidence="2"/>
<dbReference type="EMBL" id="CP000482">
    <property type="protein sequence ID" value="ABL00879.1"/>
    <property type="molecule type" value="Genomic_DNA"/>
</dbReference>
<dbReference type="RefSeq" id="WP_011737096.1">
    <property type="nucleotide sequence ID" value="NC_008609.1"/>
</dbReference>
<dbReference type="SMR" id="A1AU58"/>
<dbReference type="STRING" id="338966.Ppro_3286"/>
<dbReference type="KEGG" id="ppd:Ppro_3286"/>
<dbReference type="eggNOG" id="COG1181">
    <property type="taxonomic scope" value="Bacteria"/>
</dbReference>
<dbReference type="HOGENOM" id="CLU_039268_1_1_7"/>
<dbReference type="UniPathway" id="UPA00219"/>
<dbReference type="Proteomes" id="UP000006732">
    <property type="component" value="Chromosome"/>
</dbReference>
<dbReference type="GO" id="GO:0005737">
    <property type="term" value="C:cytoplasm"/>
    <property type="evidence" value="ECO:0007669"/>
    <property type="project" value="UniProtKB-SubCell"/>
</dbReference>
<dbReference type="GO" id="GO:0005524">
    <property type="term" value="F:ATP binding"/>
    <property type="evidence" value="ECO:0007669"/>
    <property type="project" value="UniProtKB-KW"/>
</dbReference>
<dbReference type="GO" id="GO:0008716">
    <property type="term" value="F:D-alanine-D-alanine ligase activity"/>
    <property type="evidence" value="ECO:0007669"/>
    <property type="project" value="UniProtKB-UniRule"/>
</dbReference>
<dbReference type="GO" id="GO:0046872">
    <property type="term" value="F:metal ion binding"/>
    <property type="evidence" value="ECO:0007669"/>
    <property type="project" value="UniProtKB-KW"/>
</dbReference>
<dbReference type="GO" id="GO:0071555">
    <property type="term" value="P:cell wall organization"/>
    <property type="evidence" value="ECO:0007669"/>
    <property type="project" value="UniProtKB-KW"/>
</dbReference>
<dbReference type="GO" id="GO:0009252">
    <property type="term" value="P:peptidoglycan biosynthetic process"/>
    <property type="evidence" value="ECO:0007669"/>
    <property type="project" value="UniProtKB-UniRule"/>
</dbReference>
<dbReference type="GO" id="GO:0008360">
    <property type="term" value="P:regulation of cell shape"/>
    <property type="evidence" value="ECO:0007669"/>
    <property type="project" value="UniProtKB-KW"/>
</dbReference>
<dbReference type="FunFam" id="3.30.1490.20:FF:000007">
    <property type="entry name" value="D-alanine--D-alanine ligase"/>
    <property type="match status" value="1"/>
</dbReference>
<dbReference type="Gene3D" id="3.40.50.20">
    <property type="match status" value="1"/>
</dbReference>
<dbReference type="Gene3D" id="3.30.1490.20">
    <property type="entry name" value="ATP-grasp fold, A domain"/>
    <property type="match status" value="1"/>
</dbReference>
<dbReference type="Gene3D" id="3.30.470.20">
    <property type="entry name" value="ATP-grasp fold, B domain"/>
    <property type="match status" value="1"/>
</dbReference>
<dbReference type="HAMAP" id="MF_00047">
    <property type="entry name" value="Dala_Dala_lig"/>
    <property type="match status" value="1"/>
</dbReference>
<dbReference type="InterPro" id="IPR011761">
    <property type="entry name" value="ATP-grasp"/>
</dbReference>
<dbReference type="InterPro" id="IPR013815">
    <property type="entry name" value="ATP_grasp_subdomain_1"/>
</dbReference>
<dbReference type="InterPro" id="IPR000291">
    <property type="entry name" value="D-Ala_lig_Van_CS"/>
</dbReference>
<dbReference type="InterPro" id="IPR005905">
    <property type="entry name" value="D_ala_D_ala"/>
</dbReference>
<dbReference type="InterPro" id="IPR011095">
    <property type="entry name" value="Dala_Dala_lig_C"/>
</dbReference>
<dbReference type="InterPro" id="IPR011127">
    <property type="entry name" value="Dala_Dala_lig_N"/>
</dbReference>
<dbReference type="InterPro" id="IPR016185">
    <property type="entry name" value="PreATP-grasp_dom_sf"/>
</dbReference>
<dbReference type="NCBIfam" id="TIGR01205">
    <property type="entry name" value="D_ala_D_alaTIGR"/>
    <property type="match status" value="1"/>
</dbReference>
<dbReference type="NCBIfam" id="NF002378">
    <property type="entry name" value="PRK01372.1"/>
    <property type="match status" value="1"/>
</dbReference>
<dbReference type="PANTHER" id="PTHR23132">
    <property type="entry name" value="D-ALANINE--D-ALANINE LIGASE"/>
    <property type="match status" value="1"/>
</dbReference>
<dbReference type="PANTHER" id="PTHR23132:SF23">
    <property type="entry name" value="D-ALANINE--D-ALANINE LIGASE B"/>
    <property type="match status" value="1"/>
</dbReference>
<dbReference type="Pfam" id="PF07478">
    <property type="entry name" value="Dala_Dala_lig_C"/>
    <property type="match status" value="1"/>
</dbReference>
<dbReference type="Pfam" id="PF01820">
    <property type="entry name" value="Dala_Dala_lig_N"/>
    <property type="match status" value="1"/>
</dbReference>
<dbReference type="PIRSF" id="PIRSF039102">
    <property type="entry name" value="Ddl/VanB"/>
    <property type="match status" value="1"/>
</dbReference>
<dbReference type="SUPFAM" id="SSF56059">
    <property type="entry name" value="Glutathione synthetase ATP-binding domain-like"/>
    <property type="match status" value="1"/>
</dbReference>
<dbReference type="SUPFAM" id="SSF52440">
    <property type="entry name" value="PreATP-grasp domain"/>
    <property type="match status" value="1"/>
</dbReference>
<dbReference type="PROSITE" id="PS50975">
    <property type="entry name" value="ATP_GRASP"/>
    <property type="match status" value="1"/>
</dbReference>
<dbReference type="PROSITE" id="PS00843">
    <property type="entry name" value="DALA_DALA_LIGASE_1"/>
    <property type="match status" value="1"/>
</dbReference>
<organism>
    <name type="scientific">Pelobacter propionicus (strain DSM 2379 / NBRC 103807 / OttBd1)</name>
    <dbReference type="NCBI Taxonomy" id="338966"/>
    <lineage>
        <taxon>Bacteria</taxon>
        <taxon>Pseudomonadati</taxon>
        <taxon>Thermodesulfobacteriota</taxon>
        <taxon>Desulfuromonadia</taxon>
        <taxon>Desulfuromonadales</taxon>
        <taxon>Desulfuromonadaceae</taxon>
        <taxon>Pelobacter</taxon>
    </lineage>
</organism>
<sequence length="310" mass="33365">MNDIRSRKIAVLMGGLSAEREVSLASGAAVCQALVARGFDALSVDVARDLPLVLSREGIGAAFIALHGRYGEDGCVQGLLELMAIPYTGSGVLASALAMHKLYSKQAFVSAGILTAPFHHFRRGERVSLSHLSFGLPLVVKPVQEGSSVGISIVKEESQLAAAVKLAFRHDDEILVEQFIKGQEVQVGILDDRPMGAIEIVSRNEFYDFEAKYTDGMAEHFFPARLEKGLYEEALRVGLAAHHALGCRCYSRVDLLVTPAGECYVLEVNTLPGMTALSLLPEIAAKGADLPFEELVERIILSADLSVKTG</sequence>
<reference key="1">
    <citation type="submission" date="2006-10" db="EMBL/GenBank/DDBJ databases">
        <title>Complete sequence of chromosome of Pelobacter propionicus DSM 2379.</title>
        <authorList>
            <consortium name="US DOE Joint Genome Institute"/>
            <person name="Copeland A."/>
            <person name="Lucas S."/>
            <person name="Lapidus A."/>
            <person name="Barry K."/>
            <person name="Detter J.C."/>
            <person name="Glavina del Rio T."/>
            <person name="Hammon N."/>
            <person name="Israni S."/>
            <person name="Dalin E."/>
            <person name="Tice H."/>
            <person name="Pitluck S."/>
            <person name="Saunders E."/>
            <person name="Brettin T."/>
            <person name="Bruce D."/>
            <person name="Han C."/>
            <person name="Tapia R."/>
            <person name="Schmutz J."/>
            <person name="Larimer F."/>
            <person name="Land M."/>
            <person name="Hauser L."/>
            <person name="Kyrpides N."/>
            <person name="Kim E."/>
            <person name="Lovley D."/>
            <person name="Richardson P."/>
        </authorList>
    </citation>
    <scope>NUCLEOTIDE SEQUENCE [LARGE SCALE GENOMIC DNA]</scope>
    <source>
        <strain>DSM 2379 / NBRC 103807 / OttBd1</strain>
    </source>
</reference>
<proteinExistence type="inferred from homology"/>